<organism>
    <name type="scientific">Cryptococcus neoformans var. neoformans serotype D (strain JEC21 / ATCC MYA-565)</name>
    <name type="common">Filobasidiella neoformans</name>
    <dbReference type="NCBI Taxonomy" id="214684"/>
    <lineage>
        <taxon>Eukaryota</taxon>
        <taxon>Fungi</taxon>
        <taxon>Dikarya</taxon>
        <taxon>Basidiomycota</taxon>
        <taxon>Agaricomycotina</taxon>
        <taxon>Tremellomycetes</taxon>
        <taxon>Tremellales</taxon>
        <taxon>Cryptococcaceae</taxon>
        <taxon>Cryptococcus</taxon>
        <taxon>Cryptococcus neoformans species complex</taxon>
    </lineage>
</organism>
<comment type="function">
    <text evidence="1">Involved in rRNA processing.</text>
</comment>
<comment type="subcellular location">
    <subcellularLocation>
        <location evidence="1">Nucleus</location>
        <location evidence="1">Nucleolus</location>
    </subcellularLocation>
</comment>
<comment type="similarity">
    <text evidence="4">Belongs to the EFG1 family.</text>
</comment>
<accession>P0CN34</accession>
<accession>Q55HI6</accession>
<accession>Q5K724</accession>
<keyword id="KW-0175">Coiled coil</keyword>
<keyword id="KW-0539">Nucleus</keyword>
<keyword id="KW-1185">Reference proteome</keyword>
<keyword id="KW-0698">rRNA processing</keyword>
<gene>
    <name type="primary">EFG1</name>
    <name type="ordered locus">CNN01370</name>
</gene>
<feature type="chain" id="PRO_0000330270" description="rRNA-processing protein EFG1">
    <location>
        <begin position="1"/>
        <end position="286"/>
    </location>
</feature>
<feature type="region of interest" description="Disordered" evidence="3">
    <location>
        <begin position="1"/>
        <end position="57"/>
    </location>
</feature>
<feature type="region of interest" description="Disordered" evidence="3">
    <location>
        <begin position="167"/>
        <end position="213"/>
    </location>
</feature>
<feature type="region of interest" description="Disordered" evidence="3">
    <location>
        <begin position="259"/>
        <end position="286"/>
    </location>
</feature>
<feature type="coiled-coil region" evidence="2">
    <location>
        <begin position="53"/>
        <end position="103"/>
    </location>
</feature>
<feature type="compositionally biased region" description="Basic residues" evidence="3">
    <location>
        <begin position="1"/>
        <end position="18"/>
    </location>
</feature>
<feature type="compositionally biased region" description="Basic and acidic residues" evidence="3">
    <location>
        <begin position="204"/>
        <end position="213"/>
    </location>
</feature>
<feature type="compositionally biased region" description="Acidic residues" evidence="3">
    <location>
        <begin position="274"/>
        <end position="286"/>
    </location>
</feature>
<proteinExistence type="inferred from homology"/>
<sequence>MPADKKQRKGAHPYRKPRPNPSDPSSSDKPARPKPTHRIPATEARDGAGIPGLSKLKSSIRQTKRLLAKENLEPGLRVSTQRRLTSLEADLAAAERREVERKNGAKYHKVKFFERQKLVRLIKRFKRKLLDSETSSKKRSKHEEELLDARIMLNYVLHYPNTQKYISLFPSNPNQTEDEDDDDDSSKPKLKLPPLLHPVPSTEECEKMDKPTKRRYDLLLETKRLMEESKLKSEPETDLKKGQVDGVVVGLGADVQIGLGDKKEAKQNAAQGTGEEEDDFFESGDE</sequence>
<name>EFG1P_CRYNJ</name>
<reference key="1">
    <citation type="journal article" date="2005" name="Science">
        <title>The genome of the basidiomycetous yeast and human pathogen Cryptococcus neoformans.</title>
        <authorList>
            <person name="Loftus B.J."/>
            <person name="Fung E."/>
            <person name="Roncaglia P."/>
            <person name="Rowley D."/>
            <person name="Amedeo P."/>
            <person name="Bruno D."/>
            <person name="Vamathevan J."/>
            <person name="Miranda M."/>
            <person name="Anderson I.J."/>
            <person name="Fraser J.A."/>
            <person name="Allen J.E."/>
            <person name="Bosdet I.E."/>
            <person name="Brent M.R."/>
            <person name="Chiu R."/>
            <person name="Doering T.L."/>
            <person name="Donlin M.J."/>
            <person name="D'Souza C.A."/>
            <person name="Fox D.S."/>
            <person name="Grinberg V."/>
            <person name="Fu J."/>
            <person name="Fukushima M."/>
            <person name="Haas B.J."/>
            <person name="Huang J.C."/>
            <person name="Janbon G."/>
            <person name="Jones S.J.M."/>
            <person name="Koo H.L."/>
            <person name="Krzywinski M.I."/>
            <person name="Kwon-Chung K.J."/>
            <person name="Lengeler K.B."/>
            <person name="Maiti R."/>
            <person name="Marra M.A."/>
            <person name="Marra R.E."/>
            <person name="Mathewson C.A."/>
            <person name="Mitchell T.G."/>
            <person name="Pertea M."/>
            <person name="Riggs F.R."/>
            <person name="Salzberg S.L."/>
            <person name="Schein J.E."/>
            <person name="Shvartsbeyn A."/>
            <person name="Shin H."/>
            <person name="Shumway M."/>
            <person name="Specht C.A."/>
            <person name="Suh B.B."/>
            <person name="Tenney A."/>
            <person name="Utterback T.R."/>
            <person name="Wickes B.L."/>
            <person name="Wortman J.R."/>
            <person name="Wye N.H."/>
            <person name="Kronstad J.W."/>
            <person name="Lodge J.K."/>
            <person name="Heitman J."/>
            <person name="Davis R.W."/>
            <person name="Fraser C.M."/>
            <person name="Hyman R.W."/>
        </authorList>
    </citation>
    <scope>NUCLEOTIDE SEQUENCE [LARGE SCALE GENOMIC DNA]</scope>
    <source>
        <strain>JEC21 / ATCC MYA-565</strain>
    </source>
</reference>
<protein>
    <recommendedName>
        <fullName>rRNA-processing protein EFG1</fullName>
    </recommendedName>
</protein>
<evidence type="ECO:0000250" key="1"/>
<evidence type="ECO:0000255" key="2"/>
<evidence type="ECO:0000256" key="3">
    <source>
        <dbReference type="SAM" id="MobiDB-lite"/>
    </source>
</evidence>
<evidence type="ECO:0000305" key="4"/>
<dbReference type="EMBL" id="AE017356">
    <property type="protein sequence ID" value="AAW47082.2"/>
    <property type="molecule type" value="Genomic_DNA"/>
</dbReference>
<dbReference type="RefSeq" id="XP_568599.1">
    <property type="nucleotide sequence ID" value="XM_568599.1"/>
</dbReference>
<dbReference type="SMR" id="P0CN34"/>
<dbReference type="STRING" id="214684.P0CN34"/>
<dbReference type="PaxDb" id="214684-P0CN34"/>
<dbReference type="EnsemblFungi" id="AAW47082">
    <property type="protein sequence ID" value="AAW47082"/>
    <property type="gene ID" value="CNN01370"/>
</dbReference>
<dbReference type="VEuPathDB" id="FungiDB:CNN01370"/>
<dbReference type="eggNOG" id="KOG4484">
    <property type="taxonomic scope" value="Eukaryota"/>
</dbReference>
<dbReference type="InParanoid" id="P0CN34"/>
<dbReference type="OrthoDB" id="47732at2759"/>
<dbReference type="Proteomes" id="UP000002149">
    <property type="component" value="Chromosome 14"/>
</dbReference>
<dbReference type="GO" id="GO:0005730">
    <property type="term" value="C:nucleolus"/>
    <property type="evidence" value="ECO:0007669"/>
    <property type="project" value="UniProtKB-SubCell"/>
</dbReference>
<dbReference type="GO" id="GO:0000462">
    <property type="term" value="P:maturation of SSU-rRNA from tricistronic rRNA transcript (SSU-rRNA, 5.8S rRNA, LSU-rRNA)"/>
    <property type="evidence" value="ECO:0000318"/>
    <property type="project" value="GO_Central"/>
</dbReference>
<dbReference type="InterPro" id="IPR019310">
    <property type="entry name" value="Efg1"/>
</dbReference>
<dbReference type="InterPro" id="IPR050786">
    <property type="entry name" value="EFG1_rRNA-proc"/>
</dbReference>
<dbReference type="PANTHER" id="PTHR33911">
    <property type="entry name" value="RRNA-PROCESSING PROTEIN EFG1"/>
    <property type="match status" value="1"/>
</dbReference>
<dbReference type="PANTHER" id="PTHR33911:SF1">
    <property type="entry name" value="RRNA-PROCESSING PROTEIN EFG1"/>
    <property type="match status" value="1"/>
</dbReference>
<dbReference type="Pfam" id="PF10153">
    <property type="entry name" value="Efg1"/>
    <property type="match status" value="1"/>
</dbReference>